<reference key="1">
    <citation type="journal article" date="2003" name="Genome Res.">
        <title>Comparative genome analysis of Vibrio vulnificus, a marine pathogen.</title>
        <authorList>
            <person name="Chen C.-Y."/>
            <person name="Wu K.-M."/>
            <person name="Chang Y.-C."/>
            <person name="Chang C.-H."/>
            <person name="Tsai H.-C."/>
            <person name="Liao T.-L."/>
            <person name="Liu Y.-M."/>
            <person name="Chen H.-J."/>
            <person name="Shen A.B.-T."/>
            <person name="Li J.-C."/>
            <person name="Su T.-L."/>
            <person name="Shao C.-P."/>
            <person name="Lee C.-T."/>
            <person name="Hor L.-I."/>
            <person name="Tsai S.-F."/>
        </authorList>
    </citation>
    <scope>NUCLEOTIDE SEQUENCE [LARGE SCALE GENOMIC DNA]</scope>
    <source>
        <strain>YJ016</strain>
    </source>
</reference>
<dbReference type="EC" id="4.3.3.7" evidence="1"/>
<dbReference type="EMBL" id="BA000037">
    <property type="protein sequence ID" value="BAC95268.1"/>
    <property type="status" value="ALT_INIT"/>
    <property type="molecule type" value="Genomic_DNA"/>
</dbReference>
<dbReference type="RefSeq" id="WP_013571291.1">
    <property type="nucleotide sequence ID" value="NC_005139.1"/>
</dbReference>
<dbReference type="SMR" id="Q7MIL2"/>
<dbReference type="STRING" id="672.VV93_v1c22060"/>
<dbReference type="GeneID" id="93896135"/>
<dbReference type="KEGG" id="vvy:VV2504"/>
<dbReference type="eggNOG" id="COG0329">
    <property type="taxonomic scope" value="Bacteria"/>
</dbReference>
<dbReference type="HOGENOM" id="CLU_049343_7_1_6"/>
<dbReference type="UniPathway" id="UPA00034">
    <property type="reaction ID" value="UER00017"/>
</dbReference>
<dbReference type="Proteomes" id="UP000002675">
    <property type="component" value="Chromosome I"/>
</dbReference>
<dbReference type="GO" id="GO:0005829">
    <property type="term" value="C:cytosol"/>
    <property type="evidence" value="ECO:0007669"/>
    <property type="project" value="TreeGrafter"/>
</dbReference>
<dbReference type="GO" id="GO:0008840">
    <property type="term" value="F:4-hydroxy-tetrahydrodipicolinate synthase activity"/>
    <property type="evidence" value="ECO:0007669"/>
    <property type="project" value="UniProtKB-UniRule"/>
</dbReference>
<dbReference type="GO" id="GO:0019877">
    <property type="term" value="P:diaminopimelate biosynthetic process"/>
    <property type="evidence" value="ECO:0007669"/>
    <property type="project" value="UniProtKB-UniRule"/>
</dbReference>
<dbReference type="GO" id="GO:0009089">
    <property type="term" value="P:lysine biosynthetic process via diaminopimelate"/>
    <property type="evidence" value="ECO:0007669"/>
    <property type="project" value="UniProtKB-UniRule"/>
</dbReference>
<dbReference type="CDD" id="cd00950">
    <property type="entry name" value="DHDPS"/>
    <property type="match status" value="1"/>
</dbReference>
<dbReference type="FunFam" id="3.20.20.70:FF:000046">
    <property type="entry name" value="4-hydroxy-tetrahydrodipicolinate synthase"/>
    <property type="match status" value="1"/>
</dbReference>
<dbReference type="Gene3D" id="3.20.20.70">
    <property type="entry name" value="Aldolase class I"/>
    <property type="match status" value="1"/>
</dbReference>
<dbReference type="HAMAP" id="MF_00418">
    <property type="entry name" value="DapA"/>
    <property type="match status" value="1"/>
</dbReference>
<dbReference type="InterPro" id="IPR013785">
    <property type="entry name" value="Aldolase_TIM"/>
</dbReference>
<dbReference type="InterPro" id="IPR005263">
    <property type="entry name" value="DapA"/>
</dbReference>
<dbReference type="InterPro" id="IPR002220">
    <property type="entry name" value="DapA-like"/>
</dbReference>
<dbReference type="InterPro" id="IPR020625">
    <property type="entry name" value="Schiff_base-form_aldolases_AS"/>
</dbReference>
<dbReference type="InterPro" id="IPR020624">
    <property type="entry name" value="Schiff_base-form_aldolases_CS"/>
</dbReference>
<dbReference type="NCBIfam" id="TIGR00674">
    <property type="entry name" value="dapA"/>
    <property type="match status" value="1"/>
</dbReference>
<dbReference type="PANTHER" id="PTHR12128:SF66">
    <property type="entry name" value="4-HYDROXY-2-OXOGLUTARATE ALDOLASE, MITOCHONDRIAL"/>
    <property type="match status" value="1"/>
</dbReference>
<dbReference type="PANTHER" id="PTHR12128">
    <property type="entry name" value="DIHYDRODIPICOLINATE SYNTHASE"/>
    <property type="match status" value="1"/>
</dbReference>
<dbReference type="Pfam" id="PF00701">
    <property type="entry name" value="DHDPS"/>
    <property type="match status" value="1"/>
</dbReference>
<dbReference type="PIRSF" id="PIRSF001365">
    <property type="entry name" value="DHDPS"/>
    <property type="match status" value="1"/>
</dbReference>
<dbReference type="PRINTS" id="PR00146">
    <property type="entry name" value="DHPICSNTHASE"/>
</dbReference>
<dbReference type="SMART" id="SM01130">
    <property type="entry name" value="DHDPS"/>
    <property type="match status" value="1"/>
</dbReference>
<dbReference type="SUPFAM" id="SSF51569">
    <property type="entry name" value="Aldolase"/>
    <property type="match status" value="1"/>
</dbReference>
<dbReference type="PROSITE" id="PS00665">
    <property type="entry name" value="DHDPS_1"/>
    <property type="match status" value="1"/>
</dbReference>
<dbReference type="PROSITE" id="PS00666">
    <property type="entry name" value="DHDPS_2"/>
    <property type="match status" value="1"/>
</dbReference>
<protein>
    <recommendedName>
        <fullName evidence="1">4-hydroxy-tetrahydrodipicolinate synthase</fullName>
        <shortName evidence="1">HTPA synthase</shortName>
        <ecNumber evidence="1">4.3.3.7</ecNumber>
    </recommendedName>
</protein>
<keyword id="KW-0028">Amino-acid biosynthesis</keyword>
<keyword id="KW-0963">Cytoplasm</keyword>
<keyword id="KW-0220">Diaminopimelate biosynthesis</keyword>
<keyword id="KW-0456">Lyase</keyword>
<keyword id="KW-0457">Lysine biosynthesis</keyword>
<keyword id="KW-0704">Schiff base</keyword>
<feature type="chain" id="PRO_0000103182" description="4-hydroxy-tetrahydrodipicolinate synthase">
    <location>
        <begin position="1"/>
        <end position="292"/>
    </location>
</feature>
<feature type="active site" description="Proton donor/acceptor" evidence="1">
    <location>
        <position position="133"/>
    </location>
</feature>
<feature type="active site" description="Schiff-base intermediate with substrate" evidence="1">
    <location>
        <position position="161"/>
    </location>
</feature>
<feature type="binding site" evidence="1">
    <location>
        <position position="45"/>
    </location>
    <ligand>
        <name>pyruvate</name>
        <dbReference type="ChEBI" id="CHEBI:15361"/>
    </ligand>
</feature>
<feature type="binding site" evidence="1">
    <location>
        <position position="203"/>
    </location>
    <ligand>
        <name>pyruvate</name>
        <dbReference type="ChEBI" id="CHEBI:15361"/>
    </ligand>
</feature>
<feature type="site" description="Part of a proton relay during catalysis" evidence="1">
    <location>
        <position position="44"/>
    </location>
</feature>
<feature type="site" description="Part of a proton relay during catalysis" evidence="1">
    <location>
        <position position="107"/>
    </location>
</feature>
<organism>
    <name type="scientific">Vibrio vulnificus (strain YJ016)</name>
    <dbReference type="NCBI Taxonomy" id="196600"/>
    <lineage>
        <taxon>Bacteria</taxon>
        <taxon>Pseudomonadati</taxon>
        <taxon>Pseudomonadota</taxon>
        <taxon>Gammaproteobacteria</taxon>
        <taxon>Vibrionales</taxon>
        <taxon>Vibrionaceae</taxon>
        <taxon>Vibrio</taxon>
    </lineage>
</organism>
<sequence length="292" mass="31437">MLSGSIVALLTPFKADGEVDFDGLQKLVEYHIAAGTNGIVAVGTTGESSTLTVEEHVKVVNKTVEFVNGRIPVIAGTGANATHESVTFSRLLNDSGIDACLSVTPYYNKPTQEGLFQHYKAIAEVSNVPQILYNVPGRTAVDLLPETVARLAELENIVALKDATGDLNRVAIHRELCGEDFILLSGDDATGLDFVKLGGQGVISVTNNIAAKDMADMFRLALEGRFEEAEVINQRLMPLHKNLFIESSPIPVKWAATQLGLIECGHLRLPLTELSEKCHPIVAQAMTDAGIY</sequence>
<comment type="function">
    <text evidence="1">Catalyzes the condensation of (S)-aspartate-beta-semialdehyde [(S)-ASA] and pyruvate to 4-hydroxy-tetrahydrodipicolinate (HTPA).</text>
</comment>
<comment type="catalytic activity">
    <reaction evidence="1">
        <text>L-aspartate 4-semialdehyde + pyruvate = (2S,4S)-4-hydroxy-2,3,4,5-tetrahydrodipicolinate + H2O + H(+)</text>
        <dbReference type="Rhea" id="RHEA:34171"/>
        <dbReference type="ChEBI" id="CHEBI:15361"/>
        <dbReference type="ChEBI" id="CHEBI:15377"/>
        <dbReference type="ChEBI" id="CHEBI:15378"/>
        <dbReference type="ChEBI" id="CHEBI:67139"/>
        <dbReference type="ChEBI" id="CHEBI:537519"/>
        <dbReference type="EC" id="4.3.3.7"/>
    </reaction>
</comment>
<comment type="pathway">
    <text evidence="1">Amino-acid biosynthesis; L-lysine biosynthesis via DAP pathway; (S)-tetrahydrodipicolinate from L-aspartate: step 3/4.</text>
</comment>
<comment type="subunit">
    <text evidence="1">Homotetramer; dimer of dimers.</text>
</comment>
<comment type="subcellular location">
    <subcellularLocation>
        <location evidence="1">Cytoplasm</location>
    </subcellularLocation>
</comment>
<comment type="similarity">
    <text evidence="1">Belongs to the DapA family.</text>
</comment>
<comment type="caution">
    <text evidence="2">Was originally thought to be a dihydrodipicolinate synthase (DHDPS), catalyzing the condensation of (S)-aspartate-beta-semialdehyde [(S)-ASA] and pyruvate to dihydrodipicolinate (DHDP). However, it was shown in E.coli that the product of the enzymatic reaction is not dihydrodipicolinate but in fact (4S)-4-hydroxy-2,3,4,5-tetrahydro-(2S)-dipicolinic acid (HTPA), and that the consecutive dehydration reaction leading to DHDP is not spontaneous but catalyzed by DapB.</text>
</comment>
<comment type="sequence caution" evidence="2">
    <conflict type="erroneous initiation">
        <sequence resource="EMBL-CDS" id="BAC95268"/>
    </conflict>
</comment>
<proteinExistence type="inferred from homology"/>
<name>DAPA_VIBVY</name>
<gene>
    <name evidence="1" type="primary">dapA</name>
    <name type="ordered locus">VV2504</name>
</gene>
<evidence type="ECO:0000255" key="1">
    <source>
        <dbReference type="HAMAP-Rule" id="MF_00418"/>
    </source>
</evidence>
<evidence type="ECO:0000305" key="2"/>
<accession>Q7MIL2</accession>